<proteinExistence type="inferred from homology"/>
<protein>
    <recommendedName>
        <fullName>Genetic interactor of prohibitins 3, mitochondrial</fullName>
    </recommendedName>
    <alternativeName>
        <fullName>Found in mitochondrial proteome protein 38</fullName>
    </alternativeName>
</protein>
<evidence type="ECO:0000250" key="1"/>
<evidence type="ECO:0000255" key="2"/>
<evidence type="ECO:0000255" key="3">
    <source>
        <dbReference type="PROSITE-ProRule" id="PRU01058"/>
    </source>
</evidence>
<name>GEP3_VANPO</name>
<accession>A7TQC5</accession>
<sequence>MFVVRRSIVFQQSRRQFSGSIAWLQACSSCGIKLQSKNPALIGYYTKPKPLEVGKVETLEDVKYMLFSQDIQKIKEIEDGTTLEDEKNRIPHSLICKRCSDAVHQNKYDVMDFKNCSLKEVIRSVPNDKPIVSIASLPEFPFHVNKNILENEKESVLVFTKADQVLKTSSATSTRLPIFFKDYFKYHLGLQVNKVLAVSSLKKWNLSGLLSNLRNNSYFLGNPNVGKSTLMNSLIQRYNGTKLDFNSNISDDMVNDAQHKHLRKAQLAGVSHIPNLTRECQGYQVDKKRIYDLPGYSENVDELPLERIVKSNWLEWVRKTNLFDTKKVKKKPYITIKGTENGRCYTIGGLFFLQPPPYSINQIIKFIPGEPYIFKNVTRALETFKSVYGNDTPHPLEKYCGINDEYCDITKYQRHVIPPFQGSIEIVFKDIGYILLRSTGRYSFNGLYEIWVPKGISVCIREPLEKLIEEGYVQYTESKNKISSCPKGRPLVSSTYIMDPNEEDTFAKIREMYLDRTENEISVRRLVKEDPLEVVSNKHDTPPNLYWHYKW</sequence>
<dbReference type="EMBL" id="DS480456">
    <property type="protein sequence ID" value="EDO15524.1"/>
    <property type="molecule type" value="Genomic_DNA"/>
</dbReference>
<dbReference type="RefSeq" id="XP_001643382.1">
    <property type="nucleotide sequence ID" value="XM_001643332.1"/>
</dbReference>
<dbReference type="FunCoup" id="A7TQC5">
    <property type="interactions" value="105"/>
</dbReference>
<dbReference type="STRING" id="436907.A7TQC5"/>
<dbReference type="GeneID" id="5543597"/>
<dbReference type="KEGG" id="vpo:Kpol_479p12"/>
<dbReference type="eggNOG" id="ENOG502S0UP">
    <property type="taxonomic scope" value="Eukaryota"/>
</dbReference>
<dbReference type="HOGENOM" id="CLU_025792_1_0_1"/>
<dbReference type="InParanoid" id="A7TQC5"/>
<dbReference type="OMA" id="IIPPFYG"/>
<dbReference type="OrthoDB" id="1696305at2759"/>
<dbReference type="PhylomeDB" id="A7TQC5"/>
<dbReference type="Proteomes" id="UP000000267">
    <property type="component" value="Unassembled WGS sequence"/>
</dbReference>
<dbReference type="GO" id="GO:0005739">
    <property type="term" value="C:mitochondrion"/>
    <property type="evidence" value="ECO:0007669"/>
    <property type="project" value="UniProtKB-SubCell"/>
</dbReference>
<dbReference type="GO" id="GO:0005525">
    <property type="term" value="F:GTP binding"/>
    <property type="evidence" value="ECO:0007669"/>
    <property type="project" value="InterPro"/>
</dbReference>
<dbReference type="Gene3D" id="3.40.50.300">
    <property type="entry name" value="P-loop containing nucleotide triphosphate hydrolases"/>
    <property type="match status" value="1"/>
</dbReference>
<dbReference type="InterPro" id="IPR030378">
    <property type="entry name" value="G_CP_dom"/>
</dbReference>
<dbReference type="InterPro" id="IPR050896">
    <property type="entry name" value="Mito_lipid_metab_GTPase"/>
</dbReference>
<dbReference type="InterPro" id="IPR027417">
    <property type="entry name" value="P-loop_NTPase"/>
</dbReference>
<dbReference type="PANTHER" id="PTHR46434">
    <property type="entry name" value="GENETIC INTERACTOR OF PROHIBITINS 3, MITOCHONDRIAL"/>
    <property type="match status" value="1"/>
</dbReference>
<dbReference type="PANTHER" id="PTHR46434:SF1">
    <property type="entry name" value="GENETIC INTERACTOR OF PROHIBITINS 3, MITOCHONDRIAL"/>
    <property type="match status" value="1"/>
</dbReference>
<dbReference type="SUPFAM" id="SSF52540">
    <property type="entry name" value="P-loop containing nucleoside triphosphate hydrolases"/>
    <property type="match status" value="1"/>
</dbReference>
<dbReference type="PROSITE" id="PS51721">
    <property type="entry name" value="G_CP"/>
    <property type="match status" value="1"/>
</dbReference>
<comment type="function">
    <text evidence="1">May be involved in the mitochondrial lipid metabolism.</text>
</comment>
<comment type="subcellular location">
    <subcellularLocation>
        <location evidence="1">Mitochondrion</location>
    </subcellularLocation>
</comment>
<comment type="similarity">
    <text evidence="3">Belongs to the TRAFAC class YlqF/YawG GTPase family. GEP3 subfamily.</text>
</comment>
<organism>
    <name type="scientific">Vanderwaltozyma polyspora (strain ATCC 22028 / DSM 70294 / BCRC 21397 / CBS 2163 / NBRC 10782 / NRRL Y-8283 / UCD 57-17)</name>
    <name type="common">Kluyveromyces polysporus</name>
    <dbReference type="NCBI Taxonomy" id="436907"/>
    <lineage>
        <taxon>Eukaryota</taxon>
        <taxon>Fungi</taxon>
        <taxon>Dikarya</taxon>
        <taxon>Ascomycota</taxon>
        <taxon>Saccharomycotina</taxon>
        <taxon>Saccharomycetes</taxon>
        <taxon>Saccharomycetales</taxon>
        <taxon>Saccharomycetaceae</taxon>
        <taxon>Vanderwaltozyma</taxon>
    </lineage>
</organism>
<keyword id="KW-0496">Mitochondrion</keyword>
<keyword id="KW-1185">Reference proteome</keyword>
<keyword id="KW-0809">Transit peptide</keyword>
<gene>
    <name type="primary">GEP3</name>
    <name type="synonym">FMP48</name>
    <name type="ORF">Kpol_479p12</name>
</gene>
<reference key="1">
    <citation type="journal article" date="2007" name="Proc. Natl. Acad. Sci. U.S.A.">
        <title>Independent sorting-out of thousands of duplicated gene pairs in two yeast species descended from a whole-genome duplication.</title>
        <authorList>
            <person name="Scannell D.R."/>
            <person name="Frank A.C."/>
            <person name="Conant G.C."/>
            <person name="Byrne K.P."/>
            <person name="Woolfit M."/>
            <person name="Wolfe K.H."/>
        </authorList>
    </citation>
    <scope>NUCLEOTIDE SEQUENCE [LARGE SCALE GENOMIC DNA]</scope>
    <source>
        <strain>ATCC 22028 / DSM 70294 / BCRC 21397 / CBS 2163 / NBRC 10782 / NRRL Y-8283 / UCD 57-17</strain>
    </source>
</reference>
<feature type="transit peptide" description="Mitochondrion" evidence="2">
    <location>
        <begin position="1"/>
        <end position="24"/>
    </location>
</feature>
<feature type="chain" id="PRO_0000409641" description="Genetic interactor of prohibitins 3, mitochondrial">
    <location>
        <begin position="25"/>
        <end position="551"/>
    </location>
</feature>
<feature type="domain" description="CP-type G" evidence="3">
    <location>
        <begin position="118"/>
        <end position="299"/>
    </location>
</feature>